<feature type="chain" id="PRO_0000345521" description="Small ribosomal subunit protein bS18">
    <location>
        <begin position="1"/>
        <end position="89"/>
    </location>
</feature>
<accession>A6LIX8</accession>
<name>RS18_PARD8</name>
<organism>
    <name type="scientific">Parabacteroides distasonis (strain ATCC 8503 / DSM 20701 / CIP 104284 / JCM 5825 / NCTC 11152)</name>
    <dbReference type="NCBI Taxonomy" id="435591"/>
    <lineage>
        <taxon>Bacteria</taxon>
        <taxon>Pseudomonadati</taxon>
        <taxon>Bacteroidota</taxon>
        <taxon>Bacteroidia</taxon>
        <taxon>Bacteroidales</taxon>
        <taxon>Tannerellaceae</taxon>
        <taxon>Parabacteroides</taxon>
    </lineage>
</organism>
<sequence length="89" mass="10488">MAATQSEIRYLTPPSVDVKKKKYCRFKKNGIKYIDYKDPEFLKKFLNEQGKILPRRITGTSLKFQRRVAQAVKRARHLALLPYVTDLMK</sequence>
<keyword id="KW-1185">Reference proteome</keyword>
<keyword id="KW-0687">Ribonucleoprotein</keyword>
<keyword id="KW-0689">Ribosomal protein</keyword>
<keyword id="KW-0694">RNA-binding</keyword>
<keyword id="KW-0699">rRNA-binding</keyword>
<dbReference type="EMBL" id="CP000140">
    <property type="protein sequence ID" value="ABR45642.1"/>
    <property type="molecule type" value="Genomic_DNA"/>
</dbReference>
<dbReference type="RefSeq" id="WP_005637107.1">
    <property type="nucleotide sequence ID" value="NZ_LR215978.1"/>
</dbReference>
<dbReference type="SMR" id="A6LIX8"/>
<dbReference type="STRING" id="435591.BDI_3968"/>
<dbReference type="PaxDb" id="435591-BDI_3968"/>
<dbReference type="GeneID" id="93524143"/>
<dbReference type="KEGG" id="pdi:BDI_3968"/>
<dbReference type="eggNOG" id="COG0238">
    <property type="taxonomic scope" value="Bacteria"/>
</dbReference>
<dbReference type="HOGENOM" id="CLU_148710_2_0_10"/>
<dbReference type="BioCyc" id="PDIS435591:G1G5A-4079-MONOMER"/>
<dbReference type="Proteomes" id="UP000000566">
    <property type="component" value="Chromosome"/>
</dbReference>
<dbReference type="GO" id="GO:0022627">
    <property type="term" value="C:cytosolic small ribosomal subunit"/>
    <property type="evidence" value="ECO:0007669"/>
    <property type="project" value="TreeGrafter"/>
</dbReference>
<dbReference type="GO" id="GO:0070181">
    <property type="term" value="F:small ribosomal subunit rRNA binding"/>
    <property type="evidence" value="ECO:0007669"/>
    <property type="project" value="TreeGrafter"/>
</dbReference>
<dbReference type="GO" id="GO:0003735">
    <property type="term" value="F:structural constituent of ribosome"/>
    <property type="evidence" value="ECO:0007669"/>
    <property type="project" value="InterPro"/>
</dbReference>
<dbReference type="GO" id="GO:0006412">
    <property type="term" value="P:translation"/>
    <property type="evidence" value="ECO:0007669"/>
    <property type="project" value="UniProtKB-UniRule"/>
</dbReference>
<dbReference type="FunFam" id="4.10.640.10:FF:000004">
    <property type="entry name" value="30S ribosomal protein S18"/>
    <property type="match status" value="1"/>
</dbReference>
<dbReference type="Gene3D" id="4.10.640.10">
    <property type="entry name" value="Ribosomal protein S18"/>
    <property type="match status" value="1"/>
</dbReference>
<dbReference type="HAMAP" id="MF_00270">
    <property type="entry name" value="Ribosomal_bS18"/>
    <property type="match status" value="1"/>
</dbReference>
<dbReference type="InterPro" id="IPR001648">
    <property type="entry name" value="Ribosomal_bS18"/>
</dbReference>
<dbReference type="InterPro" id="IPR018275">
    <property type="entry name" value="Ribosomal_bS18_CS"/>
</dbReference>
<dbReference type="InterPro" id="IPR036870">
    <property type="entry name" value="Ribosomal_bS18_sf"/>
</dbReference>
<dbReference type="NCBIfam" id="TIGR00165">
    <property type="entry name" value="S18"/>
    <property type="match status" value="1"/>
</dbReference>
<dbReference type="PANTHER" id="PTHR13479">
    <property type="entry name" value="30S RIBOSOMAL PROTEIN S18"/>
    <property type="match status" value="1"/>
</dbReference>
<dbReference type="PANTHER" id="PTHR13479:SF40">
    <property type="entry name" value="SMALL RIBOSOMAL SUBUNIT PROTEIN BS18M"/>
    <property type="match status" value="1"/>
</dbReference>
<dbReference type="Pfam" id="PF01084">
    <property type="entry name" value="Ribosomal_S18"/>
    <property type="match status" value="1"/>
</dbReference>
<dbReference type="PRINTS" id="PR00974">
    <property type="entry name" value="RIBOSOMALS18"/>
</dbReference>
<dbReference type="SUPFAM" id="SSF46911">
    <property type="entry name" value="Ribosomal protein S18"/>
    <property type="match status" value="1"/>
</dbReference>
<dbReference type="PROSITE" id="PS00057">
    <property type="entry name" value="RIBOSOMAL_S18"/>
    <property type="match status" value="1"/>
</dbReference>
<evidence type="ECO:0000255" key="1">
    <source>
        <dbReference type="HAMAP-Rule" id="MF_00270"/>
    </source>
</evidence>
<evidence type="ECO:0000305" key="2"/>
<gene>
    <name evidence="1" type="primary">rpsR</name>
    <name type="ordered locus">BDI_3968</name>
</gene>
<reference key="1">
    <citation type="journal article" date="2007" name="PLoS Biol.">
        <title>Evolution of symbiotic bacteria in the distal human intestine.</title>
        <authorList>
            <person name="Xu J."/>
            <person name="Mahowald M.A."/>
            <person name="Ley R.E."/>
            <person name="Lozupone C.A."/>
            <person name="Hamady M."/>
            <person name="Martens E.C."/>
            <person name="Henrissat B."/>
            <person name="Coutinho P.M."/>
            <person name="Minx P."/>
            <person name="Latreille P."/>
            <person name="Cordum H."/>
            <person name="Van Brunt A."/>
            <person name="Kim K."/>
            <person name="Fulton R.S."/>
            <person name="Fulton L.A."/>
            <person name="Clifton S.W."/>
            <person name="Wilson R.K."/>
            <person name="Knight R.D."/>
            <person name="Gordon J.I."/>
        </authorList>
    </citation>
    <scope>NUCLEOTIDE SEQUENCE [LARGE SCALE GENOMIC DNA]</scope>
    <source>
        <strain>ATCC 8503 / DSM 20701 / CIP 104284 / JCM 5825 / NCTC 11152</strain>
    </source>
</reference>
<proteinExistence type="inferred from homology"/>
<protein>
    <recommendedName>
        <fullName evidence="1">Small ribosomal subunit protein bS18</fullName>
    </recommendedName>
    <alternativeName>
        <fullName evidence="2">30S ribosomal protein S18</fullName>
    </alternativeName>
</protein>
<comment type="function">
    <text evidence="1">Binds as a heterodimer with protein bS6 to the central domain of the 16S rRNA, where it helps stabilize the platform of the 30S subunit.</text>
</comment>
<comment type="subunit">
    <text evidence="1">Part of the 30S ribosomal subunit. Forms a tight heterodimer with protein bS6.</text>
</comment>
<comment type="similarity">
    <text evidence="1">Belongs to the bacterial ribosomal protein bS18 family.</text>
</comment>